<gene>
    <name evidence="1" type="primary">rplD</name>
    <name type="ordered locus">XAC0973</name>
</gene>
<reference key="1">
    <citation type="journal article" date="2002" name="Nature">
        <title>Comparison of the genomes of two Xanthomonas pathogens with differing host specificities.</title>
        <authorList>
            <person name="da Silva A.C.R."/>
            <person name="Ferro J.A."/>
            <person name="Reinach F.C."/>
            <person name="Farah C.S."/>
            <person name="Furlan L.R."/>
            <person name="Quaggio R.B."/>
            <person name="Monteiro-Vitorello C.B."/>
            <person name="Van Sluys M.A."/>
            <person name="Almeida N.F. Jr."/>
            <person name="Alves L.M.C."/>
            <person name="do Amaral A.M."/>
            <person name="Bertolini M.C."/>
            <person name="Camargo L.E.A."/>
            <person name="Camarotte G."/>
            <person name="Cannavan F."/>
            <person name="Cardozo J."/>
            <person name="Chambergo F."/>
            <person name="Ciapina L.P."/>
            <person name="Cicarelli R.M.B."/>
            <person name="Coutinho L.L."/>
            <person name="Cursino-Santos J.R."/>
            <person name="El-Dorry H."/>
            <person name="Faria J.B."/>
            <person name="Ferreira A.J.S."/>
            <person name="Ferreira R.C.C."/>
            <person name="Ferro M.I.T."/>
            <person name="Formighieri E.F."/>
            <person name="Franco M.C."/>
            <person name="Greggio C.C."/>
            <person name="Gruber A."/>
            <person name="Katsuyama A.M."/>
            <person name="Kishi L.T."/>
            <person name="Leite R.P."/>
            <person name="Lemos E.G.M."/>
            <person name="Lemos M.V.F."/>
            <person name="Locali E.C."/>
            <person name="Machado M.A."/>
            <person name="Madeira A.M.B.N."/>
            <person name="Martinez-Rossi N.M."/>
            <person name="Martins E.C."/>
            <person name="Meidanis J."/>
            <person name="Menck C.F.M."/>
            <person name="Miyaki C.Y."/>
            <person name="Moon D.H."/>
            <person name="Moreira L.M."/>
            <person name="Novo M.T.M."/>
            <person name="Okura V.K."/>
            <person name="Oliveira M.C."/>
            <person name="Oliveira V.R."/>
            <person name="Pereira H.A."/>
            <person name="Rossi A."/>
            <person name="Sena J.A.D."/>
            <person name="Silva C."/>
            <person name="de Souza R.F."/>
            <person name="Spinola L.A.F."/>
            <person name="Takita M.A."/>
            <person name="Tamura R.E."/>
            <person name="Teixeira E.C."/>
            <person name="Tezza R.I.D."/>
            <person name="Trindade dos Santos M."/>
            <person name="Truffi D."/>
            <person name="Tsai S.M."/>
            <person name="White F.F."/>
            <person name="Setubal J.C."/>
            <person name="Kitajima J.P."/>
        </authorList>
    </citation>
    <scope>NUCLEOTIDE SEQUENCE [LARGE SCALE GENOMIC DNA]</scope>
    <source>
        <strain>306</strain>
    </source>
</reference>
<sequence>MELVITGSNNKVSVSDAVFGREFSEDLVHQVVVAYRNAGRAGTKAQKTRSEVAGTTKKSKKQKGGGARHGALTAPIFVGGGVTFAAKPRSFEQKVNRKMYRAAICAIFSELNRQGRLMIVDAFDLEATKTKGLIEKLKGLEVGKRPLIVTEEASEHLYLSARNLPYVQVRDVQGLDPVALVGADTVVITADAVKKVEEWLA</sequence>
<protein>
    <recommendedName>
        <fullName evidence="1">Large ribosomal subunit protein uL4</fullName>
    </recommendedName>
    <alternativeName>
        <fullName evidence="3">50S ribosomal protein L4</fullName>
    </alternativeName>
</protein>
<dbReference type="EMBL" id="AE008923">
    <property type="protein sequence ID" value="AAM35856.1"/>
    <property type="molecule type" value="Genomic_DNA"/>
</dbReference>
<dbReference type="RefSeq" id="WP_005917124.1">
    <property type="nucleotide sequence ID" value="NC_003919.1"/>
</dbReference>
<dbReference type="SMR" id="Q8PNS3"/>
<dbReference type="GeneID" id="97509337"/>
<dbReference type="KEGG" id="xac:XAC0973"/>
<dbReference type="eggNOG" id="COG0088">
    <property type="taxonomic scope" value="Bacteria"/>
</dbReference>
<dbReference type="HOGENOM" id="CLU_041575_5_2_6"/>
<dbReference type="Proteomes" id="UP000000576">
    <property type="component" value="Chromosome"/>
</dbReference>
<dbReference type="GO" id="GO:1990904">
    <property type="term" value="C:ribonucleoprotein complex"/>
    <property type="evidence" value="ECO:0007669"/>
    <property type="project" value="UniProtKB-KW"/>
</dbReference>
<dbReference type="GO" id="GO:0005840">
    <property type="term" value="C:ribosome"/>
    <property type="evidence" value="ECO:0007669"/>
    <property type="project" value="UniProtKB-KW"/>
</dbReference>
<dbReference type="GO" id="GO:0019843">
    <property type="term" value="F:rRNA binding"/>
    <property type="evidence" value="ECO:0007669"/>
    <property type="project" value="UniProtKB-UniRule"/>
</dbReference>
<dbReference type="GO" id="GO:0003735">
    <property type="term" value="F:structural constituent of ribosome"/>
    <property type="evidence" value="ECO:0007669"/>
    <property type="project" value="InterPro"/>
</dbReference>
<dbReference type="GO" id="GO:0006412">
    <property type="term" value="P:translation"/>
    <property type="evidence" value="ECO:0007669"/>
    <property type="project" value="UniProtKB-UniRule"/>
</dbReference>
<dbReference type="FunFam" id="3.40.1370.10:FF:000007">
    <property type="entry name" value="50S ribosomal protein L4"/>
    <property type="match status" value="1"/>
</dbReference>
<dbReference type="Gene3D" id="3.40.1370.10">
    <property type="match status" value="1"/>
</dbReference>
<dbReference type="HAMAP" id="MF_01328_B">
    <property type="entry name" value="Ribosomal_uL4_B"/>
    <property type="match status" value="1"/>
</dbReference>
<dbReference type="InterPro" id="IPR002136">
    <property type="entry name" value="Ribosomal_uL4"/>
</dbReference>
<dbReference type="InterPro" id="IPR013005">
    <property type="entry name" value="Ribosomal_uL4-like"/>
</dbReference>
<dbReference type="InterPro" id="IPR023574">
    <property type="entry name" value="Ribosomal_uL4_dom_sf"/>
</dbReference>
<dbReference type="NCBIfam" id="TIGR03953">
    <property type="entry name" value="rplD_bact"/>
    <property type="match status" value="1"/>
</dbReference>
<dbReference type="PANTHER" id="PTHR10746">
    <property type="entry name" value="50S RIBOSOMAL PROTEIN L4"/>
    <property type="match status" value="1"/>
</dbReference>
<dbReference type="PANTHER" id="PTHR10746:SF6">
    <property type="entry name" value="LARGE RIBOSOMAL SUBUNIT PROTEIN UL4M"/>
    <property type="match status" value="1"/>
</dbReference>
<dbReference type="Pfam" id="PF00573">
    <property type="entry name" value="Ribosomal_L4"/>
    <property type="match status" value="1"/>
</dbReference>
<dbReference type="SUPFAM" id="SSF52166">
    <property type="entry name" value="Ribosomal protein L4"/>
    <property type="match status" value="1"/>
</dbReference>
<proteinExistence type="inferred from homology"/>
<accession>Q8PNS3</accession>
<comment type="function">
    <text evidence="1">One of the primary rRNA binding proteins, this protein initially binds near the 5'-end of the 23S rRNA. It is important during the early stages of 50S assembly. It makes multiple contacts with different domains of the 23S rRNA in the assembled 50S subunit and ribosome.</text>
</comment>
<comment type="function">
    <text evidence="1">Forms part of the polypeptide exit tunnel.</text>
</comment>
<comment type="subunit">
    <text evidence="1">Part of the 50S ribosomal subunit.</text>
</comment>
<comment type="similarity">
    <text evidence="1">Belongs to the universal ribosomal protein uL4 family.</text>
</comment>
<organism>
    <name type="scientific">Xanthomonas axonopodis pv. citri (strain 306)</name>
    <dbReference type="NCBI Taxonomy" id="190486"/>
    <lineage>
        <taxon>Bacteria</taxon>
        <taxon>Pseudomonadati</taxon>
        <taxon>Pseudomonadota</taxon>
        <taxon>Gammaproteobacteria</taxon>
        <taxon>Lysobacterales</taxon>
        <taxon>Lysobacteraceae</taxon>
        <taxon>Xanthomonas</taxon>
    </lineage>
</organism>
<feature type="chain" id="PRO_0000129315" description="Large ribosomal subunit protein uL4">
    <location>
        <begin position="1"/>
        <end position="201"/>
    </location>
</feature>
<feature type="region of interest" description="Disordered" evidence="2">
    <location>
        <begin position="44"/>
        <end position="68"/>
    </location>
</feature>
<name>RL4_XANAC</name>
<evidence type="ECO:0000255" key="1">
    <source>
        <dbReference type="HAMAP-Rule" id="MF_01328"/>
    </source>
</evidence>
<evidence type="ECO:0000256" key="2">
    <source>
        <dbReference type="SAM" id="MobiDB-lite"/>
    </source>
</evidence>
<evidence type="ECO:0000305" key="3"/>
<keyword id="KW-0687">Ribonucleoprotein</keyword>
<keyword id="KW-0689">Ribosomal protein</keyword>
<keyword id="KW-0694">RNA-binding</keyword>
<keyword id="KW-0699">rRNA-binding</keyword>